<gene>
    <name type="primary">psaJ</name>
</gene>
<comment type="function">
    <text evidence="1">May help in the organization of the PsaE and PsaF subunits.</text>
</comment>
<comment type="subcellular location">
    <subcellularLocation>
        <location evidence="1">Cellular thylakoid membrane</location>
        <topology evidence="1">Single-pass membrane protein</topology>
    </subcellularLocation>
</comment>
<comment type="similarity">
    <text evidence="3">Belongs to the PsaJ family.</text>
</comment>
<organism>
    <name type="scientific">Mastigocladus laminosus</name>
    <name type="common">Fischerella sp.</name>
    <dbReference type="NCBI Taxonomy" id="83541"/>
    <lineage>
        <taxon>Bacteria</taxon>
        <taxon>Bacillati</taxon>
        <taxon>Cyanobacteriota</taxon>
        <taxon>Cyanophyceae</taxon>
        <taxon>Nostocales</taxon>
        <taxon>Hapalosiphonaceae</taxon>
        <taxon>Mastigocladus</taxon>
    </lineage>
</organism>
<keyword id="KW-0472">Membrane</keyword>
<keyword id="KW-0602">Photosynthesis</keyword>
<keyword id="KW-0603">Photosystem I</keyword>
<keyword id="KW-0793">Thylakoid</keyword>
<keyword id="KW-0812">Transmembrane</keyword>
<keyword id="KW-1133">Transmembrane helix</keyword>
<sequence length="45" mass="5202">MNNQSPLLKFLTTAPVITTIWLFITAGILIEFNRFFPDLLFHPLP</sequence>
<evidence type="ECO:0000250" key="1"/>
<evidence type="ECO:0000255" key="2"/>
<evidence type="ECO:0000305" key="3"/>
<name>PSAJ_MASLA</name>
<reference key="1">
    <citation type="online journal article" date="1998" name="Plant Gene Register">
        <title>Molecular cloning of the psaF and psaJ genes of photosystem I from the thermophilic cyanobacterium Mastigocladus laminosus.</title>
        <authorList>
            <person name="He Z.-Y."/>
            <person name="Chitnis V.P."/>
            <person name="Chitnis P.R."/>
            <person name="Nechushtai R."/>
        </authorList>
        <locator>PGR98-026</locator>
    </citation>
    <scope>NUCLEOTIDE SEQUENCE [GENOMIC DNA]</scope>
    <source>
        <strain>PCC 7605</strain>
    </source>
</reference>
<proteinExistence type="inferred from homology"/>
<protein>
    <recommendedName>
        <fullName>Photosystem I reaction center subunit IX</fullName>
    </recommendedName>
</protein>
<feature type="chain" id="PRO_0000207821" description="Photosystem I reaction center subunit IX">
    <location>
        <begin position="1"/>
        <end position="45"/>
    </location>
</feature>
<feature type="transmembrane region" description="Helical" evidence="2">
    <location>
        <begin position="10"/>
        <end position="30"/>
    </location>
</feature>
<accession>O31128</accession>
<dbReference type="EMBL" id="AF030004">
    <property type="protein sequence ID" value="AAC04843.1"/>
    <property type="molecule type" value="Genomic_DNA"/>
</dbReference>
<dbReference type="SMR" id="O31128"/>
<dbReference type="GO" id="GO:0009522">
    <property type="term" value="C:photosystem I"/>
    <property type="evidence" value="ECO:0007669"/>
    <property type="project" value="UniProtKB-KW"/>
</dbReference>
<dbReference type="GO" id="GO:0031676">
    <property type="term" value="C:plasma membrane-derived thylakoid membrane"/>
    <property type="evidence" value="ECO:0007669"/>
    <property type="project" value="UniProtKB-SubCell"/>
</dbReference>
<dbReference type="GO" id="GO:0015979">
    <property type="term" value="P:photosynthesis"/>
    <property type="evidence" value="ECO:0007669"/>
    <property type="project" value="UniProtKB-UniRule"/>
</dbReference>
<dbReference type="Gene3D" id="1.20.5.510">
    <property type="entry name" value="Single helix bin"/>
    <property type="match status" value="1"/>
</dbReference>
<dbReference type="HAMAP" id="MF_00522">
    <property type="entry name" value="PSI_PsaJ"/>
    <property type="match status" value="1"/>
</dbReference>
<dbReference type="InterPro" id="IPR002615">
    <property type="entry name" value="PSI_PsaJ"/>
</dbReference>
<dbReference type="InterPro" id="IPR036062">
    <property type="entry name" value="PSI_PsaJ_sf"/>
</dbReference>
<dbReference type="NCBIfam" id="NF002743">
    <property type="entry name" value="PRK02733.1"/>
    <property type="match status" value="1"/>
</dbReference>
<dbReference type="PANTHER" id="PTHR36082">
    <property type="match status" value="1"/>
</dbReference>
<dbReference type="PANTHER" id="PTHR36082:SF2">
    <property type="entry name" value="PHOTOSYSTEM I REACTION CENTER SUBUNIT IX"/>
    <property type="match status" value="1"/>
</dbReference>
<dbReference type="Pfam" id="PF01701">
    <property type="entry name" value="PSI_PsaJ"/>
    <property type="match status" value="1"/>
</dbReference>
<dbReference type="SUPFAM" id="SSF81544">
    <property type="entry name" value="Subunit IX of photosystem I reaction centre, PsaJ"/>
    <property type="match status" value="1"/>
</dbReference>